<organism>
    <name type="scientific">Manduca sexta</name>
    <name type="common">Tobacco hawkmoth</name>
    <name type="synonym">Tobacco hornworm</name>
    <dbReference type="NCBI Taxonomy" id="7130"/>
    <lineage>
        <taxon>Eukaryota</taxon>
        <taxon>Metazoa</taxon>
        <taxon>Ecdysozoa</taxon>
        <taxon>Arthropoda</taxon>
        <taxon>Hexapoda</taxon>
        <taxon>Insecta</taxon>
        <taxon>Pterygota</taxon>
        <taxon>Neoptera</taxon>
        <taxon>Endopterygota</taxon>
        <taxon>Lepidoptera</taxon>
        <taxon>Glossata</taxon>
        <taxon>Ditrysia</taxon>
        <taxon>Bombycoidea</taxon>
        <taxon>Sphingidae</taxon>
        <taxon>Sphinginae</taxon>
        <taxon>Sphingini</taxon>
        <taxon>Manduca</taxon>
    </lineage>
</organism>
<name>ECLH_MANSE</name>
<reference key="1">
    <citation type="journal article" date="1989" name="Proc. Natl. Acad. Sci. U.S.A.">
        <title>Isolation and expression of the eclosion hormone gene from the tobacco hornworm, Manduca sexta.</title>
        <authorList>
            <person name="Horodyski F.M."/>
            <person name="Riddiford L.M."/>
            <person name="Truman J.W."/>
        </authorList>
    </citation>
    <scope>NUCLEOTIDE SEQUENCE [GENOMIC DNA / MRNA]</scope>
</reference>
<reference key="2">
    <citation type="journal article" date="1987" name="Biochem. Biophys. Res. Commun.">
        <title>Isolation and primary structure of the eclosion hormone of the tobacco hornworm, Manduca sexta.</title>
        <authorList>
            <person name="Kataoka H."/>
            <person name="Troetschler R.G."/>
            <person name="Kramer S.J."/>
            <person name="Cesarin B.J."/>
            <person name="Schooley D.A."/>
        </authorList>
    </citation>
    <scope>PROTEIN SEQUENCE OF 27-88</scope>
</reference>
<reference key="3">
    <citation type="journal article" date="1987" name="FEBS Lett.">
        <title>Microanalysis of the amino acid sequence of the eclosion hormone from the tobacco hornworm Manduca sexta.</title>
        <authorList>
            <person name="Marti T."/>
            <person name="Takio K."/>
            <person name="Walsh K.A."/>
            <person name="Terzi G."/>
            <person name="Truman J.W."/>
        </authorList>
    </citation>
    <scope>PROTEIN SEQUENCE OF 27-88</scope>
</reference>
<reference key="4">
    <citation type="journal article" date="1992" name="Int. J. Pept. Protein Res.">
        <title>Complete structure of eclosion hormone of Manduca sexta. Assignment of disulfide bond location.</title>
        <authorList>
            <person name="Kataoka H."/>
            <person name="Li J.P."/>
            <person name="Lui A.S.T."/>
            <person name="Kramer S.J."/>
            <person name="Schooley D.A."/>
        </authorList>
    </citation>
    <scope>DISULFIDE BONDS</scope>
</reference>
<feature type="signal peptide" evidence="2 3">
    <location>
        <begin position="1"/>
        <end position="26"/>
    </location>
</feature>
<feature type="chain" id="PRO_0000021145" description="Eclosion hormone">
    <location>
        <begin position="27"/>
        <end position="88"/>
    </location>
</feature>
<feature type="disulfide bond" evidence="1">
    <location>
        <begin position="40"/>
        <end position="64"/>
    </location>
</feature>
<feature type="disulfide bond" evidence="1">
    <location>
        <begin position="44"/>
        <end position="60"/>
    </location>
</feature>
<feature type="disulfide bond" evidence="1">
    <location>
        <begin position="47"/>
        <end position="75"/>
    </location>
</feature>
<dbReference type="EMBL" id="M27808">
    <property type="protein sequence ID" value="AAA29310.1"/>
    <property type="molecule type" value="Genomic_DNA"/>
</dbReference>
<dbReference type="EMBL" id="M26922">
    <property type="protein sequence ID" value="AAA29311.1"/>
    <property type="molecule type" value="mRNA"/>
</dbReference>
<dbReference type="PIR" id="A33993">
    <property type="entry name" value="A33993"/>
</dbReference>
<dbReference type="RefSeq" id="XP_030031898.2">
    <property type="nucleotide sequence ID" value="XM_030176038.2"/>
</dbReference>
<dbReference type="RefSeq" id="XP_037296919.1">
    <property type="nucleotide sequence ID" value="XM_037441022.1"/>
</dbReference>
<dbReference type="SMR" id="P11919"/>
<dbReference type="EnsemblMetazoa" id="XM_030176038.2">
    <property type="protein sequence ID" value="XP_030031898.2"/>
    <property type="gene ID" value="LOC115448567"/>
</dbReference>
<dbReference type="EnsemblMetazoa" id="XM_037441022.1">
    <property type="protein sequence ID" value="XP_037296919.1"/>
    <property type="gene ID" value="LOC115448567"/>
</dbReference>
<dbReference type="GeneID" id="115448567"/>
<dbReference type="OrthoDB" id="6432957at2759"/>
<dbReference type="GO" id="GO:0005576">
    <property type="term" value="C:extracellular region"/>
    <property type="evidence" value="ECO:0007669"/>
    <property type="project" value="UniProtKB-SubCell"/>
</dbReference>
<dbReference type="GO" id="GO:0008255">
    <property type="term" value="F:ecdysis-triggering hormone activity"/>
    <property type="evidence" value="ECO:0007669"/>
    <property type="project" value="InterPro"/>
</dbReference>
<dbReference type="GO" id="GO:0018990">
    <property type="term" value="P:ecdysis, chitin-based cuticle"/>
    <property type="evidence" value="ECO:0007669"/>
    <property type="project" value="InterPro"/>
</dbReference>
<dbReference type="GO" id="GO:0007218">
    <property type="term" value="P:neuropeptide signaling pathway"/>
    <property type="evidence" value="ECO:0007669"/>
    <property type="project" value="UniProtKB-KW"/>
</dbReference>
<dbReference type="InterPro" id="IPR006825">
    <property type="entry name" value="Eclosion"/>
</dbReference>
<dbReference type="Pfam" id="PF04736">
    <property type="entry name" value="Eclosion"/>
    <property type="match status" value="1"/>
</dbReference>
<dbReference type="PIRSF" id="PIRSF001859">
    <property type="entry name" value="Eclosion"/>
    <property type="match status" value="1"/>
</dbReference>
<proteinExistence type="evidence at protein level"/>
<keyword id="KW-0903">Direct protein sequencing</keyword>
<keyword id="KW-1015">Disulfide bond</keyword>
<keyword id="KW-0372">Hormone</keyword>
<keyword id="KW-0527">Neuropeptide</keyword>
<keyword id="KW-0964">Secreted</keyword>
<keyword id="KW-0732">Signal</keyword>
<accession>P11919</accession>
<comment type="function">
    <text>Neuropeptide that triggers the performance of ecdysis behaviors at the end of a molt. It triggers adult behavior patterns: larval, pupal and adult ecdysis, and plasticization during the molt.</text>
</comment>
<comment type="subcellular location">
    <subcellularLocation>
        <location>Secreted</location>
    </subcellularLocation>
</comment>
<comment type="similarity">
    <text evidence="4">Belongs to the insect eclosion hormone family.</text>
</comment>
<protein>
    <recommendedName>
        <fullName>Eclosion hormone</fullName>
    </recommendedName>
    <alternativeName>
        <fullName>EH</fullName>
    </alternativeName>
    <alternativeName>
        <fullName>Ecdysis activator</fullName>
    </alternativeName>
</protein>
<sequence length="88" mass="9675">MAGKVTVAFFMFAMIAFLANFGYVECNPAIATGYDPMEICIENCAQCKKMLGAWFEGPLCAESCIKFKGKLIPECEDFASIAPFLNKL</sequence>
<evidence type="ECO:0000269" key="1">
    <source>
    </source>
</evidence>
<evidence type="ECO:0000269" key="2">
    <source>
    </source>
</evidence>
<evidence type="ECO:0000269" key="3">
    <source>
    </source>
</evidence>
<evidence type="ECO:0000305" key="4"/>